<sequence>MTQLSSSQPIGETFTIWKFTFFKFYFGILDHREQTKNLFLNYSTKYISFEFLCCCFPFFIGLTQLVLLRYQNQFTSEVLQKTIPGLGSSYQPISWETFSYLNYKSYLSEGEAPHPFNKEGSLSKNSASSERREPNLMGLSPLYNTPQIDVYSDSIIITPPQKLDFSSAANSQSLLGWGDQQNPLIVGEIKSQKPTGYLSEVVEKKWILPSRNAVIFYKTNSSHGKDIQKLKIKKPLGSLRLEIFGRKSPYGLDLFPKKLNPIYAKLNPSTLPDGGKVSVGLFSESSARTGDSTVFKSTLNPAGVVKKEESKSLQGFLKLSKKNFDPLNYQQRTQVQQAVFDSLLYNQGLLVNNASRPIKLKPKANSFLDTTFDLIRSKKQKLSAKKTGGFAIPENSNKKVECSNSKLQNYNLLERYTLWKNYKAQTNERNTRAFNEQQSFLFDSNNGSVKKESNQYSTQAPQHGPSPNTPKGVLRDGSVGGGWKSLTKVHSLLTQWNYVQKRNNLTSRLMSGYNYPDVTNDGVKALNSSLTSFLSSGSRSPFGDTLRRPATNQSQRLSRMLPLKIHLPGNSTSAITYPVPATGWTTSPQHSFRSVGGNAFTDKLSRANDSQPAPQHLSPNTPKGVLRDGSVGGENQKEQEKQQNSGSLYQTTRGRSFGNPFSTQLVFLQRVLETDKNESQTDSEASSAMLRPQHFGSIGERSGLSQTTLNGGNQFKQTEGTLLNQIRKDSFTLSYQNAKKPTNWSRKTKAYVLLDCETNDLTPEQTLSTKPAFEGEALRPSDLKLWLKTYLSSDNPALKHKSTFFSTDTTKTPMLTELKATPDGRSTPKGSPEGARDLAISNQPSNTQKTKEKNSSHWSTEGRSTPSSLQVTKSLKVIETPTQTDANGQQIDLNRETRRWSIPGYQTWQIPLIDKHSSLFLLERLEPKLYKKITEFLTNDSKLSFNASQKVGPTGLPAEKEKVSERVLQESFTRNVLPLTEVRYPTNSVFMGNRNQSQNVLATENEYPASFFDLKSLSFFLENKTKKVNQSVVAEGHSVGRLVYNKKINFRSSPKINFHYLPVVEGPVYGATQNTLQVAGTYSKTTSVYKHLTTKSNQSSSTINQSRSEVPTNRVETWEPLTPFSWLIVTQLSFGLISLKVLQNLYQDYGKELISYVLDLLSIFGDSVEASLDESLKEEFQAQQDGSGARLIRKVDKRFQNLAGIQRILPECSEIVWFLRNYSFMKSSGLVYLSPVDRENRCVKDALHWIQDFPEHFSSTSLHIEEEGYPVDVISKNFAKGNKIVSTLQEGGTTKSNKIQFGHSKRYSLSLVSQNLTALALAPSNWLTFEKMIPKGILLVGPPGTGKTLLVQAIAGEANVPVLVQSLSLISQPGESDSGAEKLTDLFKRARELSPCIVFIDEIDTLGIKRQNLIQNPMGTDNLLNCLYPKNSGQQLSMTDGSKSSTVRTTTRLGKECPFPPHTTRSFGLDTNKDEMETRSSESTKASHESSNEMEVEKNQLSALIRLLVEMDGLNPLNGVIVFGATNRPEVLDPALIRPGRFDQILPIELPGKQKRVEILKLYAKKLGTAKSISWEYFANRTVGLSAADLAAIMNQSTILAVFNDQRHTLKTLEYGLNIIYKPKTGPILTKKVQGELNSSLADKSSNWTVDKKASTTSKSSLTSTPQHFHGSVGGEYPPKQVVVGTPGTTLLKQQLELEKNVLFKKGLEPKSQKLEIVTPIQQQSLVSEKLDLLKKKTYKKNISQLKLKTLNKLEKLSVQSLNTKTPQHFQGLMGGVSQREGNFTESLFSEKVTYTLSQLVQTWPKVLTSSKLKQKTPQYNEVLSSESLNKKIWVSSDTTHPYSVQKQFLTYVSVKKGFGSTLDVSMSLPELTVEKWLSSDSTYATDPFTLNRFGYYQSGKVLTQCLVEKIDSKTLEVSETSQSLKTDVSKSGLLNNKQKTSPSGLLFDSACNTLDSQTQQLKTPKLTHFTRLESYFDTAEATPVVLNLFPRFKNVRYQDESLRGKTEQKGNRSNPLSLASFEKQLISLLAGKASEILFFATRSVNVTKKGNSLHRGETGSQNSNFSASNWDSNLGVDLKFANKMANAMVNQWYFYSKKVLTRKTNQLALNHNTQEFNQKETIKFFQELTNQVENEMSYSVKAYKTGYFRNFQASSGKPWWQVKVAQQVGNLESAYTDWYRIYLPDTEESERNQEWTPPDQFFQNVERLARLNNKLENFTLDSEITWNDLGKMDRDFLYQSLLLNSFNQAFQVLDISRPLLDYFTDYLIRYEIMRQDTINKCLLNYEKFTDS</sequence>
<evidence type="ECO:0000255" key="1"/>
<evidence type="ECO:0000256" key="2">
    <source>
        <dbReference type="SAM" id="MobiDB-lite"/>
    </source>
</evidence>
<evidence type="ECO:0000305" key="3"/>
<gene>
    <name type="primary">ftsH</name>
</gene>
<comment type="subcellular location">
    <subcellularLocation>
        <location evidence="3">Plastid</location>
        <location evidence="3">Chloroplast membrane</location>
        <topology evidence="3">Multi-pass membrane protein</topology>
    </subcellularLocation>
</comment>
<comment type="domain">
    <text>Lacks the zinc protease domain of other FtsH proteins. Also much longer in both the N- and C-termini.</text>
</comment>
<comment type="similarity">
    <text evidence="3">Belongs to the AAA ATPase family.</text>
</comment>
<accession>Q20EZ8</accession>
<feature type="chain" id="PRO_0000293974" description="ATP-dependent zinc metalloprotease FtsH homolog">
    <location>
        <begin position="1"/>
        <end position="2292"/>
    </location>
</feature>
<feature type="transmembrane region" description="Helical" evidence="1">
    <location>
        <begin position="9"/>
        <end position="29"/>
    </location>
</feature>
<feature type="transmembrane region" description="Helical" evidence="1">
    <location>
        <begin position="47"/>
        <end position="67"/>
    </location>
</feature>
<feature type="region of interest" description="Disordered" evidence="2">
    <location>
        <begin position="117"/>
        <end position="137"/>
    </location>
</feature>
<feature type="region of interest" description="Disordered" evidence="2">
    <location>
        <begin position="449"/>
        <end position="479"/>
    </location>
</feature>
<feature type="region of interest" description="Disordered" evidence="2">
    <location>
        <begin position="588"/>
        <end position="656"/>
    </location>
</feature>
<feature type="region of interest" description="Disordered" evidence="2">
    <location>
        <begin position="676"/>
        <end position="713"/>
    </location>
</feature>
<feature type="region of interest" description="Disordered" evidence="2">
    <location>
        <begin position="814"/>
        <end position="887"/>
    </location>
</feature>
<feature type="region of interest" description="Disordered" evidence="2">
    <location>
        <begin position="1435"/>
        <end position="1494"/>
    </location>
</feature>
<feature type="region of interest" description="Disordered" evidence="2">
    <location>
        <begin position="1652"/>
        <end position="1678"/>
    </location>
</feature>
<feature type="compositionally biased region" description="Polar residues" evidence="2">
    <location>
        <begin position="449"/>
        <end position="461"/>
    </location>
</feature>
<feature type="compositionally biased region" description="Polar residues" evidence="2">
    <location>
        <begin position="607"/>
        <end position="621"/>
    </location>
</feature>
<feature type="compositionally biased region" description="Polar residues" evidence="2">
    <location>
        <begin position="703"/>
        <end position="713"/>
    </location>
</feature>
<feature type="compositionally biased region" description="Polar residues" evidence="2">
    <location>
        <begin position="856"/>
        <end position="873"/>
    </location>
</feature>
<feature type="compositionally biased region" description="Polar residues" evidence="2">
    <location>
        <begin position="1435"/>
        <end position="1452"/>
    </location>
</feature>
<feature type="compositionally biased region" description="Basic and acidic residues" evidence="2">
    <location>
        <begin position="1471"/>
        <end position="1494"/>
    </location>
</feature>
<feature type="compositionally biased region" description="Low complexity" evidence="2">
    <location>
        <begin position="1655"/>
        <end position="1665"/>
    </location>
</feature>
<geneLocation type="chloroplast"/>
<reference key="1">
    <citation type="journal article" date="2006" name="BMC Biol.">
        <title>The complete chloroplast DNA sequence of the green alga Oltmannsiellopsis viridis reveals a distinctive quadripartite architecture in the chloroplast genome of early diverging ulvophytes.</title>
        <authorList>
            <person name="Pombert J.-F."/>
            <person name="Lemieux C."/>
            <person name="Turmel M."/>
        </authorList>
    </citation>
    <scope>NUCLEOTIDE SEQUENCE [LARGE SCALE GENOMIC DNA]</scope>
</reference>
<name>FTSHL_OLTVI</name>
<proteinExistence type="inferred from homology"/>
<organism>
    <name type="scientific">Oltmannsiellopsis viridis</name>
    <name type="common">Marine flagellate</name>
    <name type="synonym">Oltmannsiella viridis</name>
    <dbReference type="NCBI Taxonomy" id="51324"/>
    <lineage>
        <taxon>Eukaryota</taxon>
        <taxon>Viridiplantae</taxon>
        <taxon>Chlorophyta</taxon>
        <taxon>Ulvophyceae</taxon>
        <taxon>Oltmannsiellopsidales</taxon>
        <taxon>Oltmannsiellopsidaceae</taxon>
        <taxon>Oltmannsiellopsis</taxon>
    </lineage>
</organism>
<dbReference type="EMBL" id="DQ291132">
    <property type="protein sequence ID" value="ABB82008.1"/>
    <property type="molecule type" value="Genomic_DNA"/>
</dbReference>
<dbReference type="RefSeq" id="YP_635847.1">
    <property type="nucleotide sequence ID" value="NC_008099.1"/>
</dbReference>
<dbReference type="SMR" id="Q20EZ8"/>
<dbReference type="GeneID" id="4100186"/>
<dbReference type="GO" id="GO:0031969">
    <property type="term" value="C:chloroplast membrane"/>
    <property type="evidence" value="ECO:0007669"/>
    <property type="project" value="UniProtKB-SubCell"/>
</dbReference>
<dbReference type="GO" id="GO:0005524">
    <property type="term" value="F:ATP binding"/>
    <property type="evidence" value="ECO:0007669"/>
    <property type="project" value="InterPro"/>
</dbReference>
<dbReference type="GO" id="GO:0016887">
    <property type="term" value="F:ATP hydrolysis activity"/>
    <property type="evidence" value="ECO:0007669"/>
    <property type="project" value="InterPro"/>
</dbReference>
<dbReference type="GO" id="GO:0004176">
    <property type="term" value="F:ATP-dependent peptidase activity"/>
    <property type="evidence" value="ECO:0007669"/>
    <property type="project" value="InterPro"/>
</dbReference>
<dbReference type="GO" id="GO:0004222">
    <property type="term" value="F:metalloendopeptidase activity"/>
    <property type="evidence" value="ECO:0007669"/>
    <property type="project" value="InterPro"/>
</dbReference>
<dbReference type="GO" id="GO:0006508">
    <property type="term" value="P:proteolysis"/>
    <property type="evidence" value="ECO:0007669"/>
    <property type="project" value="InterPro"/>
</dbReference>
<dbReference type="CDD" id="cd19481">
    <property type="entry name" value="RecA-like_protease"/>
    <property type="match status" value="1"/>
</dbReference>
<dbReference type="Gene3D" id="1.10.8.60">
    <property type="match status" value="1"/>
</dbReference>
<dbReference type="Gene3D" id="3.40.50.300">
    <property type="entry name" value="P-loop containing nucleotide triphosphate hydrolases"/>
    <property type="match status" value="2"/>
</dbReference>
<dbReference type="Gene3D" id="1.20.58.760">
    <property type="entry name" value="Peptidase M41"/>
    <property type="match status" value="1"/>
</dbReference>
<dbReference type="InterPro" id="IPR003593">
    <property type="entry name" value="AAA+_ATPase"/>
</dbReference>
<dbReference type="InterPro" id="IPR003959">
    <property type="entry name" value="ATPase_AAA_core"/>
</dbReference>
<dbReference type="InterPro" id="IPR003960">
    <property type="entry name" value="ATPase_AAA_CS"/>
</dbReference>
<dbReference type="InterPro" id="IPR027417">
    <property type="entry name" value="P-loop_NTPase"/>
</dbReference>
<dbReference type="InterPro" id="IPR037219">
    <property type="entry name" value="Peptidase_M41-like"/>
</dbReference>
<dbReference type="PANTHER" id="PTHR23076:SF97">
    <property type="entry name" value="ATP-DEPENDENT ZINC METALLOPROTEASE YME1L1"/>
    <property type="match status" value="1"/>
</dbReference>
<dbReference type="PANTHER" id="PTHR23076">
    <property type="entry name" value="METALLOPROTEASE M41 FTSH"/>
    <property type="match status" value="1"/>
</dbReference>
<dbReference type="Pfam" id="PF00004">
    <property type="entry name" value="AAA"/>
    <property type="match status" value="2"/>
</dbReference>
<dbReference type="SMART" id="SM00382">
    <property type="entry name" value="AAA"/>
    <property type="match status" value="1"/>
</dbReference>
<dbReference type="SUPFAM" id="SSF52540">
    <property type="entry name" value="P-loop containing nucleoside triphosphate hydrolases"/>
    <property type="match status" value="1"/>
</dbReference>
<dbReference type="PROSITE" id="PS00674">
    <property type="entry name" value="AAA"/>
    <property type="match status" value="1"/>
</dbReference>
<keyword id="KW-0150">Chloroplast</keyword>
<keyword id="KW-0472">Membrane</keyword>
<keyword id="KW-0934">Plastid</keyword>
<keyword id="KW-0812">Transmembrane</keyword>
<keyword id="KW-1133">Transmembrane helix</keyword>
<protein>
    <recommendedName>
        <fullName>ATP-dependent zinc metalloprotease FtsH homolog</fullName>
    </recommendedName>
</protein>